<sequence>MSASWADVADSENTGSGSSNQNSHPSRPAYVPPHLRNRPAASEPVAPLPANDRVGYGGPPSGSRWAPGGSGVGVGGGGGYRADAGRPGSGSGYGGRGGGGWNNRSGGWDRREREVNPFENDDSEPEPAFTEQDNTVINFDAYEDIPIETSGDNVPPPVNTFAEIDLGEALNLNIRRCKYVKPTPVQRHAIPILLEGRDLMACAQTGSGKTAAFCFPIISGIMKDQHVQRPRGSRTVYPLAVILSPTRELASQIHDEAKKFSYQTGVKVVVAYGGTPINQQLRELERGVDILVATPGRLNDLLERARVSMQMIRFLALDEADRMLDMGFEPQIRKIVEQMDMPPRGVRQTLLFSATFPREIQRLAADFLANYIFLAVGRVGSSTDLIVQRVEFVLDSDKRSHLMDLLHAQRENGIQGKQALTLVFVETKRGADSLENWLCINGFPATSIHGDRTQQEREVALKAFKSGRTPILVATDVAARGLDIPHVAHVVNFDLPNDIDDYVHRIGRTGRAGKSGLATAFFNDGNTSLARPLAELMQEANQEVPEWLTRYASRSSFGGGKNRRSGGRFGGRDFRREGSFGSGRGGYGGGGGGYGGGGGYGGGGGYGGGGGYGGGYGGASSGGYGGEPPSAWD</sequence>
<evidence type="ECO:0000250" key="1">
    <source>
        <dbReference type="UniProtKB" id="Q8LA13"/>
    </source>
</evidence>
<evidence type="ECO:0000255" key="2">
    <source>
        <dbReference type="PROSITE-ProRule" id="PRU00541"/>
    </source>
</evidence>
<evidence type="ECO:0000255" key="3">
    <source>
        <dbReference type="PROSITE-ProRule" id="PRU00542"/>
    </source>
</evidence>
<evidence type="ECO:0000256" key="4">
    <source>
        <dbReference type="SAM" id="MobiDB-lite"/>
    </source>
</evidence>
<evidence type="ECO:0000305" key="5"/>
<name>RH37_ARATH</name>
<organism>
    <name type="scientific">Arabidopsis thaliana</name>
    <name type="common">Mouse-ear cress</name>
    <dbReference type="NCBI Taxonomy" id="3702"/>
    <lineage>
        <taxon>Eukaryota</taxon>
        <taxon>Viridiplantae</taxon>
        <taxon>Streptophyta</taxon>
        <taxon>Embryophyta</taxon>
        <taxon>Tracheophyta</taxon>
        <taxon>Spermatophyta</taxon>
        <taxon>Magnoliopsida</taxon>
        <taxon>eudicotyledons</taxon>
        <taxon>Gunneridae</taxon>
        <taxon>Pentapetalae</taxon>
        <taxon>rosids</taxon>
        <taxon>malvids</taxon>
        <taxon>Brassicales</taxon>
        <taxon>Brassicaceae</taxon>
        <taxon>Camelineae</taxon>
        <taxon>Arabidopsis</taxon>
    </lineage>
</organism>
<gene>
    <name type="primary">RH37</name>
    <name type="ordered locus">At2g42520</name>
    <name type="ORF">F14N22.21</name>
</gene>
<keyword id="KW-0007">Acetylation</keyword>
<keyword id="KW-0067">ATP-binding</keyword>
<keyword id="KW-0347">Helicase</keyword>
<keyword id="KW-0378">Hydrolase</keyword>
<keyword id="KW-0547">Nucleotide-binding</keyword>
<keyword id="KW-1185">Reference proteome</keyword>
<keyword id="KW-0694">RNA-binding</keyword>
<reference key="1">
    <citation type="journal article" date="1999" name="Nature">
        <title>Sequence and analysis of chromosome 2 of the plant Arabidopsis thaliana.</title>
        <authorList>
            <person name="Lin X."/>
            <person name="Kaul S."/>
            <person name="Rounsley S.D."/>
            <person name="Shea T.P."/>
            <person name="Benito M.-I."/>
            <person name="Town C.D."/>
            <person name="Fujii C.Y."/>
            <person name="Mason T.M."/>
            <person name="Bowman C.L."/>
            <person name="Barnstead M.E."/>
            <person name="Feldblyum T.V."/>
            <person name="Buell C.R."/>
            <person name="Ketchum K.A."/>
            <person name="Lee J.J."/>
            <person name="Ronning C.M."/>
            <person name="Koo H.L."/>
            <person name="Moffat K.S."/>
            <person name="Cronin L.A."/>
            <person name="Shen M."/>
            <person name="Pai G."/>
            <person name="Van Aken S."/>
            <person name="Umayam L."/>
            <person name="Tallon L.J."/>
            <person name="Gill J.E."/>
            <person name="Adams M.D."/>
            <person name="Carrera A.J."/>
            <person name="Creasy T.H."/>
            <person name="Goodman H.M."/>
            <person name="Somerville C.R."/>
            <person name="Copenhaver G.P."/>
            <person name="Preuss D."/>
            <person name="Nierman W.C."/>
            <person name="White O."/>
            <person name="Eisen J.A."/>
            <person name="Salzberg S.L."/>
            <person name="Fraser C.M."/>
            <person name="Venter J.C."/>
        </authorList>
    </citation>
    <scope>NUCLEOTIDE SEQUENCE [LARGE SCALE GENOMIC DNA]</scope>
    <source>
        <strain>cv. Columbia</strain>
    </source>
</reference>
<reference key="2">
    <citation type="journal article" date="2017" name="Plant J.">
        <title>Araport11: a complete reannotation of the Arabidopsis thaliana reference genome.</title>
        <authorList>
            <person name="Cheng C.Y."/>
            <person name="Krishnakumar V."/>
            <person name="Chan A.P."/>
            <person name="Thibaud-Nissen F."/>
            <person name="Schobel S."/>
            <person name="Town C.D."/>
        </authorList>
    </citation>
    <scope>GENOME REANNOTATION</scope>
    <source>
        <strain>cv. Columbia</strain>
    </source>
</reference>
<reference key="3">
    <citation type="journal article" date="2003" name="Science">
        <title>Empirical analysis of transcriptional activity in the Arabidopsis genome.</title>
        <authorList>
            <person name="Yamada K."/>
            <person name="Lim J."/>
            <person name="Dale J.M."/>
            <person name="Chen H."/>
            <person name="Shinn P."/>
            <person name="Palm C.J."/>
            <person name="Southwick A.M."/>
            <person name="Wu H.C."/>
            <person name="Kim C.J."/>
            <person name="Nguyen M."/>
            <person name="Pham P.K."/>
            <person name="Cheuk R.F."/>
            <person name="Karlin-Newmann G."/>
            <person name="Liu S.X."/>
            <person name="Lam B."/>
            <person name="Sakano H."/>
            <person name="Wu T."/>
            <person name="Yu G."/>
            <person name="Miranda M."/>
            <person name="Quach H.L."/>
            <person name="Tripp M."/>
            <person name="Chang C.H."/>
            <person name="Lee J.M."/>
            <person name="Toriumi M.J."/>
            <person name="Chan M.M."/>
            <person name="Tang C.C."/>
            <person name="Onodera C.S."/>
            <person name="Deng J.M."/>
            <person name="Akiyama K."/>
            <person name="Ansari Y."/>
            <person name="Arakawa T."/>
            <person name="Banh J."/>
            <person name="Banno F."/>
            <person name="Bowser L."/>
            <person name="Brooks S.Y."/>
            <person name="Carninci P."/>
            <person name="Chao Q."/>
            <person name="Choy N."/>
            <person name="Enju A."/>
            <person name="Goldsmith A.D."/>
            <person name="Gurjal M."/>
            <person name="Hansen N.F."/>
            <person name="Hayashizaki Y."/>
            <person name="Johnson-Hopson C."/>
            <person name="Hsuan V.W."/>
            <person name="Iida K."/>
            <person name="Karnes M."/>
            <person name="Khan S."/>
            <person name="Koesema E."/>
            <person name="Ishida J."/>
            <person name="Jiang P.X."/>
            <person name="Jones T."/>
            <person name="Kawai J."/>
            <person name="Kamiya A."/>
            <person name="Meyers C."/>
            <person name="Nakajima M."/>
            <person name="Narusaka M."/>
            <person name="Seki M."/>
            <person name="Sakurai T."/>
            <person name="Satou M."/>
            <person name="Tamse R."/>
            <person name="Vaysberg M."/>
            <person name="Wallender E.K."/>
            <person name="Wong C."/>
            <person name="Yamamura Y."/>
            <person name="Yuan S."/>
            <person name="Shinozaki K."/>
            <person name="Davis R.W."/>
            <person name="Theologis A."/>
            <person name="Ecker J.R."/>
        </authorList>
    </citation>
    <scope>NUCLEOTIDE SEQUENCE [LARGE SCALE MRNA]</scope>
    <source>
        <strain>cv. Columbia</strain>
    </source>
</reference>
<reference key="4">
    <citation type="journal article" date="2004" name="Plant Biotechnol. J.">
        <title>DEAD-box RNA helicases in Arabidopsis thaliana: establishing a link between quantitative expression, gene structure and evolution of a family of genes.</title>
        <authorList>
            <person name="Mingam A."/>
            <person name="Toffano-Nioche C."/>
            <person name="Brunaud V."/>
            <person name="Boudet N."/>
            <person name="Kreis M."/>
            <person name="Lecharny A."/>
        </authorList>
    </citation>
    <scope>GENE FAMILY</scope>
    <scope>NOMENCLATURE</scope>
</reference>
<reference key="5">
    <citation type="journal article" date="2013" name="PLoS ONE">
        <title>Genome-wide comparative in silico analysis of the RNA helicase gene family in Zea mays and Glycine max: a comparison with Arabidopsis and Oryza sativa.</title>
        <authorList>
            <person name="Xu R."/>
            <person name="Zhang S."/>
            <person name="Huang J."/>
            <person name="Zheng C."/>
        </authorList>
    </citation>
    <scope>GENE FAMILY</scope>
</reference>
<proteinExistence type="evidence at transcript level"/>
<protein>
    <recommendedName>
        <fullName>DEAD-box ATP-dependent RNA helicase 37</fullName>
        <ecNumber>3.6.4.13</ecNumber>
    </recommendedName>
</protein>
<feature type="initiator methionine" description="Removed" evidence="1">
    <location>
        <position position="1"/>
    </location>
</feature>
<feature type="chain" id="PRO_0000239177" description="DEAD-box ATP-dependent RNA helicase 37">
    <location>
        <begin position="2"/>
        <end position="633"/>
    </location>
</feature>
<feature type="domain" description="Helicase ATP-binding" evidence="2">
    <location>
        <begin position="190"/>
        <end position="374"/>
    </location>
</feature>
<feature type="domain" description="Helicase C-terminal" evidence="3">
    <location>
        <begin position="401"/>
        <end position="552"/>
    </location>
</feature>
<feature type="region of interest" description="Disordered" evidence="4">
    <location>
        <begin position="1"/>
        <end position="110"/>
    </location>
</feature>
<feature type="region of interest" description="Disordered" evidence="4">
    <location>
        <begin position="555"/>
        <end position="600"/>
    </location>
</feature>
<feature type="short sequence motif" description="Q motif">
    <location>
        <begin position="159"/>
        <end position="187"/>
    </location>
</feature>
<feature type="short sequence motif" description="DEAD box">
    <location>
        <begin position="318"/>
        <end position="321"/>
    </location>
</feature>
<feature type="compositionally biased region" description="Polar residues" evidence="4">
    <location>
        <begin position="11"/>
        <end position="25"/>
    </location>
</feature>
<feature type="compositionally biased region" description="Gly residues" evidence="4">
    <location>
        <begin position="68"/>
        <end position="80"/>
    </location>
</feature>
<feature type="compositionally biased region" description="Gly residues" evidence="4">
    <location>
        <begin position="87"/>
        <end position="101"/>
    </location>
</feature>
<feature type="compositionally biased region" description="Gly residues" evidence="4">
    <location>
        <begin position="580"/>
        <end position="600"/>
    </location>
</feature>
<feature type="binding site" evidence="2">
    <location>
        <begin position="203"/>
        <end position="210"/>
    </location>
    <ligand>
        <name>ATP</name>
        <dbReference type="ChEBI" id="CHEBI:30616"/>
    </ligand>
</feature>
<feature type="modified residue" description="N-acetylserine" evidence="1">
    <location>
        <position position="2"/>
    </location>
</feature>
<feature type="sequence conflict" description="In Ref. 3; AAO42134." evidence="5" ref="3">
    <original>K</original>
    <variation>R</variation>
    <location>
        <position position="259"/>
    </location>
</feature>
<accession>Q84W89</accession>
<accession>Q9SIN6</accession>
<dbReference type="EC" id="3.6.4.13"/>
<dbReference type="EMBL" id="AC007087">
    <property type="protein sequence ID" value="AAD23001.1"/>
    <property type="molecule type" value="Genomic_DNA"/>
</dbReference>
<dbReference type="EMBL" id="CP002685">
    <property type="protein sequence ID" value="AEC10133.1"/>
    <property type="molecule type" value="Genomic_DNA"/>
</dbReference>
<dbReference type="EMBL" id="CP002685">
    <property type="protein sequence ID" value="ANM62393.1"/>
    <property type="molecule type" value="Genomic_DNA"/>
</dbReference>
<dbReference type="EMBL" id="CP002685">
    <property type="protein sequence ID" value="ANM62394.1"/>
    <property type="molecule type" value="Genomic_DNA"/>
</dbReference>
<dbReference type="EMBL" id="BT004111">
    <property type="protein sequence ID" value="AAO42134.1"/>
    <property type="molecule type" value="mRNA"/>
</dbReference>
<dbReference type="PIR" id="H84854">
    <property type="entry name" value="H84854"/>
</dbReference>
<dbReference type="RefSeq" id="NP_001324553.1">
    <property type="nucleotide sequence ID" value="NM_001336985.1"/>
</dbReference>
<dbReference type="RefSeq" id="NP_001324554.1">
    <property type="nucleotide sequence ID" value="NM_001336984.1"/>
</dbReference>
<dbReference type="RefSeq" id="NP_181780.1">
    <property type="nucleotide sequence ID" value="NM_129813.5"/>
</dbReference>
<dbReference type="SMR" id="Q84W89"/>
<dbReference type="BioGRID" id="4189">
    <property type="interactions" value="8"/>
</dbReference>
<dbReference type="FunCoup" id="Q84W89">
    <property type="interactions" value="3729"/>
</dbReference>
<dbReference type="IntAct" id="Q84W89">
    <property type="interactions" value="1"/>
</dbReference>
<dbReference type="STRING" id="3702.Q84W89"/>
<dbReference type="GlyGen" id="Q84W89">
    <property type="glycosylation" value="1 site"/>
</dbReference>
<dbReference type="iPTMnet" id="Q84W89"/>
<dbReference type="PaxDb" id="3702-AT2G42520.1"/>
<dbReference type="ProteomicsDB" id="236887"/>
<dbReference type="EnsemblPlants" id="AT2G42520.1">
    <property type="protein sequence ID" value="AT2G42520.1"/>
    <property type="gene ID" value="AT2G42520"/>
</dbReference>
<dbReference type="EnsemblPlants" id="AT2G42520.2">
    <property type="protein sequence ID" value="AT2G42520.2"/>
    <property type="gene ID" value="AT2G42520"/>
</dbReference>
<dbReference type="EnsemblPlants" id="AT2G42520.3">
    <property type="protein sequence ID" value="AT2G42520.3"/>
    <property type="gene ID" value="AT2G42520"/>
</dbReference>
<dbReference type="GeneID" id="818852"/>
<dbReference type="Gramene" id="AT2G42520.1">
    <property type="protein sequence ID" value="AT2G42520.1"/>
    <property type="gene ID" value="AT2G42520"/>
</dbReference>
<dbReference type="Gramene" id="AT2G42520.2">
    <property type="protein sequence ID" value="AT2G42520.2"/>
    <property type="gene ID" value="AT2G42520"/>
</dbReference>
<dbReference type="Gramene" id="AT2G42520.3">
    <property type="protein sequence ID" value="AT2G42520.3"/>
    <property type="gene ID" value="AT2G42520"/>
</dbReference>
<dbReference type="KEGG" id="ath:AT2G42520"/>
<dbReference type="Araport" id="AT2G42520"/>
<dbReference type="TAIR" id="AT2G42520">
    <property type="gene designation" value="RH37"/>
</dbReference>
<dbReference type="eggNOG" id="KOG0335">
    <property type="taxonomic scope" value="Eukaryota"/>
</dbReference>
<dbReference type="HOGENOM" id="CLU_003041_16_3_1"/>
<dbReference type="InParanoid" id="Q84W89"/>
<dbReference type="OMA" id="DANMHEW"/>
<dbReference type="OrthoDB" id="196131at2759"/>
<dbReference type="PhylomeDB" id="Q84W89"/>
<dbReference type="CD-CODE" id="4299E36E">
    <property type="entry name" value="Nucleolus"/>
</dbReference>
<dbReference type="PRO" id="PR:Q84W89"/>
<dbReference type="Proteomes" id="UP000006548">
    <property type="component" value="Chromosome 2"/>
</dbReference>
<dbReference type="ExpressionAtlas" id="Q84W89">
    <property type="expression patterns" value="baseline and differential"/>
</dbReference>
<dbReference type="GO" id="GO:0005829">
    <property type="term" value="C:cytosol"/>
    <property type="evidence" value="ECO:0000314"/>
    <property type="project" value="TAIR"/>
</dbReference>
<dbReference type="GO" id="GO:0005777">
    <property type="term" value="C:peroxisome"/>
    <property type="evidence" value="ECO:0007005"/>
    <property type="project" value="TAIR"/>
</dbReference>
<dbReference type="GO" id="GO:0005524">
    <property type="term" value="F:ATP binding"/>
    <property type="evidence" value="ECO:0007669"/>
    <property type="project" value="UniProtKB-KW"/>
</dbReference>
<dbReference type="GO" id="GO:0016887">
    <property type="term" value="F:ATP hydrolysis activity"/>
    <property type="evidence" value="ECO:0007669"/>
    <property type="project" value="RHEA"/>
</dbReference>
<dbReference type="GO" id="GO:0003729">
    <property type="term" value="F:mRNA binding"/>
    <property type="evidence" value="ECO:0000314"/>
    <property type="project" value="TAIR"/>
</dbReference>
<dbReference type="GO" id="GO:0003724">
    <property type="term" value="F:RNA helicase activity"/>
    <property type="evidence" value="ECO:0007669"/>
    <property type="project" value="UniProtKB-EC"/>
</dbReference>
<dbReference type="CDD" id="cd17967">
    <property type="entry name" value="DEADc_DDX3_DDX4"/>
    <property type="match status" value="1"/>
</dbReference>
<dbReference type="CDD" id="cd18787">
    <property type="entry name" value="SF2_C_DEAD"/>
    <property type="match status" value="1"/>
</dbReference>
<dbReference type="FunFam" id="3.40.50.300:FF:000008">
    <property type="entry name" value="ATP-dependent RNA helicase RhlB"/>
    <property type="match status" value="1"/>
</dbReference>
<dbReference type="FunFam" id="3.40.50.300:FF:000397">
    <property type="entry name" value="Probable ATP-dependent RNA helicase DDX4"/>
    <property type="match status" value="1"/>
</dbReference>
<dbReference type="Gene3D" id="3.40.50.300">
    <property type="entry name" value="P-loop containing nucleotide triphosphate hydrolases"/>
    <property type="match status" value="2"/>
</dbReference>
<dbReference type="InterPro" id="IPR011545">
    <property type="entry name" value="DEAD/DEAH_box_helicase_dom"/>
</dbReference>
<dbReference type="InterPro" id="IPR044763">
    <property type="entry name" value="Ded1/Dbp1_DEADc"/>
</dbReference>
<dbReference type="InterPro" id="IPR014001">
    <property type="entry name" value="Helicase_ATP-bd"/>
</dbReference>
<dbReference type="InterPro" id="IPR001650">
    <property type="entry name" value="Helicase_C-like"/>
</dbReference>
<dbReference type="InterPro" id="IPR027417">
    <property type="entry name" value="P-loop_NTPase"/>
</dbReference>
<dbReference type="InterPro" id="IPR014014">
    <property type="entry name" value="RNA_helicase_DEAD_Q_motif"/>
</dbReference>
<dbReference type="PANTHER" id="PTHR47958">
    <property type="entry name" value="ATP-DEPENDENT RNA HELICASE DBP3"/>
    <property type="match status" value="1"/>
</dbReference>
<dbReference type="Pfam" id="PF00270">
    <property type="entry name" value="DEAD"/>
    <property type="match status" value="1"/>
</dbReference>
<dbReference type="Pfam" id="PF00271">
    <property type="entry name" value="Helicase_C"/>
    <property type="match status" value="1"/>
</dbReference>
<dbReference type="SMART" id="SM00487">
    <property type="entry name" value="DEXDc"/>
    <property type="match status" value="1"/>
</dbReference>
<dbReference type="SMART" id="SM00490">
    <property type="entry name" value="HELICc"/>
    <property type="match status" value="1"/>
</dbReference>
<dbReference type="SUPFAM" id="SSF52540">
    <property type="entry name" value="P-loop containing nucleoside triphosphate hydrolases"/>
    <property type="match status" value="1"/>
</dbReference>
<dbReference type="PROSITE" id="PS51192">
    <property type="entry name" value="HELICASE_ATP_BIND_1"/>
    <property type="match status" value="1"/>
</dbReference>
<dbReference type="PROSITE" id="PS51194">
    <property type="entry name" value="HELICASE_CTER"/>
    <property type="match status" value="1"/>
</dbReference>
<dbReference type="PROSITE" id="PS51195">
    <property type="entry name" value="Q_MOTIF"/>
    <property type="match status" value="1"/>
</dbReference>
<comment type="catalytic activity">
    <reaction>
        <text>ATP + H2O = ADP + phosphate + H(+)</text>
        <dbReference type="Rhea" id="RHEA:13065"/>
        <dbReference type="ChEBI" id="CHEBI:15377"/>
        <dbReference type="ChEBI" id="CHEBI:15378"/>
        <dbReference type="ChEBI" id="CHEBI:30616"/>
        <dbReference type="ChEBI" id="CHEBI:43474"/>
        <dbReference type="ChEBI" id="CHEBI:456216"/>
        <dbReference type="EC" id="3.6.4.13"/>
    </reaction>
</comment>
<comment type="domain">
    <text>The Q motif is unique to and characteristic of the DEAD box family of RNA helicases and controls ATP binding and hydrolysis.</text>
</comment>
<comment type="similarity">
    <text evidence="5">Belongs to the DEAD box helicase family. DDX3/DED1 subfamily.</text>
</comment>